<keyword id="KW-0927">Auxin signaling pathway</keyword>
<keyword id="KW-0539">Nucleus</keyword>
<keyword id="KW-1185">Reference proteome</keyword>
<keyword id="KW-0678">Repressor</keyword>
<keyword id="KW-0804">Transcription</keyword>
<keyword id="KW-0805">Transcription regulation</keyword>
<dbReference type="EMBL" id="U49072">
    <property type="protein sequence ID" value="AAB84353.1"/>
    <property type="molecule type" value="mRNA"/>
</dbReference>
<dbReference type="EMBL" id="AC011437">
    <property type="protein sequence ID" value="AAF04899.1"/>
    <property type="molecule type" value="Genomic_DNA"/>
</dbReference>
<dbReference type="EMBL" id="CP002686">
    <property type="protein sequence ID" value="AEE74127.1"/>
    <property type="molecule type" value="Genomic_DNA"/>
</dbReference>
<dbReference type="EMBL" id="AF332400">
    <property type="protein sequence ID" value="AAG48764.1"/>
    <property type="molecule type" value="mRNA"/>
</dbReference>
<dbReference type="EMBL" id="AF375420">
    <property type="protein sequence ID" value="AAK53004.1"/>
    <property type="molecule type" value="mRNA"/>
</dbReference>
<dbReference type="EMBL" id="BT000857">
    <property type="protein sequence ID" value="AAN38694.1"/>
    <property type="molecule type" value="mRNA"/>
</dbReference>
<dbReference type="EMBL" id="AY087195">
    <property type="protein sequence ID" value="AAM64751.1"/>
    <property type="molecule type" value="mRNA"/>
</dbReference>
<dbReference type="RefSeq" id="NP_187124.1">
    <property type="nucleotide sequence ID" value="NM_111345.3"/>
</dbReference>
<dbReference type="SMR" id="O24407"/>
<dbReference type="BioGRID" id="4968">
    <property type="interactions" value="54"/>
</dbReference>
<dbReference type="ELM" id="O24407"/>
<dbReference type="FunCoup" id="O24407">
    <property type="interactions" value="1114"/>
</dbReference>
<dbReference type="IntAct" id="O24407">
    <property type="interactions" value="62"/>
</dbReference>
<dbReference type="STRING" id="3702.O24407"/>
<dbReference type="iPTMnet" id="O24407"/>
<dbReference type="PaxDb" id="3702-AT3G04730.1"/>
<dbReference type="ProteomicsDB" id="232188"/>
<dbReference type="DNASU" id="819633"/>
<dbReference type="EnsemblPlants" id="AT3G04730.1">
    <property type="protein sequence ID" value="AT3G04730.1"/>
    <property type="gene ID" value="AT3G04730"/>
</dbReference>
<dbReference type="GeneID" id="819633"/>
<dbReference type="Gramene" id="AT3G04730.1">
    <property type="protein sequence ID" value="AT3G04730.1"/>
    <property type="gene ID" value="AT3G04730"/>
</dbReference>
<dbReference type="KEGG" id="ath:AT3G04730"/>
<dbReference type="Araport" id="AT3G04730"/>
<dbReference type="TAIR" id="AT3G04730">
    <property type="gene designation" value="IAA16"/>
</dbReference>
<dbReference type="eggNOG" id="ENOG502QPNB">
    <property type="taxonomic scope" value="Eukaryota"/>
</dbReference>
<dbReference type="HOGENOM" id="CLU_049393_1_5_1"/>
<dbReference type="InParanoid" id="O24407"/>
<dbReference type="OMA" id="YATINFE"/>
<dbReference type="OrthoDB" id="642974at2759"/>
<dbReference type="PhylomeDB" id="O24407"/>
<dbReference type="PRO" id="PR:O24407"/>
<dbReference type="Proteomes" id="UP000006548">
    <property type="component" value="Chromosome 3"/>
</dbReference>
<dbReference type="ExpressionAtlas" id="O24407">
    <property type="expression patterns" value="baseline and differential"/>
</dbReference>
<dbReference type="GO" id="GO:0005634">
    <property type="term" value="C:nucleus"/>
    <property type="evidence" value="ECO:0007669"/>
    <property type="project" value="UniProtKB-SubCell"/>
</dbReference>
<dbReference type="GO" id="GO:0003700">
    <property type="term" value="F:DNA-binding transcription factor activity"/>
    <property type="evidence" value="ECO:0000250"/>
    <property type="project" value="TAIR"/>
</dbReference>
<dbReference type="GO" id="GO:0042802">
    <property type="term" value="F:identical protein binding"/>
    <property type="evidence" value="ECO:0000353"/>
    <property type="project" value="IntAct"/>
</dbReference>
<dbReference type="GO" id="GO:0000976">
    <property type="term" value="F:transcription cis-regulatory region binding"/>
    <property type="evidence" value="ECO:0000353"/>
    <property type="project" value="TAIR"/>
</dbReference>
<dbReference type="GO" id="GO:0009734">
    <property type="term" value="P:auxin-activated signaling pathway"/>
    <property type="evidence" value="ECO:0007669"/>
    <property type="project" value="UniProtKB-KW"/>
</dbReference>
<dbReference type="GO" id="GO:0009733">
    <property type="term" value="P:response to auxin"/>
    <property type="evidence" value="ECO:0000304"/>
    <property type="project" value="TAIR"/>
</dbReference>
<dbReference type="FunFam" id="3.10.20.90:FF:000078">
    <property type="entry name" value="Auxin-responsive protein"/>
    <property type="match status" value="1"/>
</dbReference>
<dbReference type="Gene3D" id="3.10.20.90">
    <property type="entry name" value="Phosphatidylinositol 3-kinase Catalytic Subunit, Chain A, domain 1"/>
    <property type="match status" value="1"/>
</dbReference>
<dbReference type="InterPro" id="IPR033389">
    <property type="entry name" value="AUX/IAA_dom"/>
</dbReference>
<dbReference type="InterPro" id="IPR003311">
    <property type="entry name" value="AUX_IAA"/>
</dbReference>
<dbReference type="InterPro" id="IPR053793">
    <property type="entry name" value="PB1-like"/>
</dbReference>
<dbReference type="PANTHER" id="PTHR31734:SF103">
    <property type="entry name" value="AUXIN-RESPONSIVE PROTEIN IAA16"/>
    <property type="match status" value="1"/>
</dbReference>
<dbReference type="PANTHER" id="PTHR31734">
    <property type="entry name" value="AUXIN-RESPONSIVE PROTEIN IAA17"/>
    <property type="match status" value="1"/>
</dbReference>
<dbReference type="Pfam" id="PF02309">
    <property type="entry name" value="AUX_IAA"/>
    <property type="match status" value="1"/>
</dbReference>
<dbReference type="SUPFAM" id="SSF54277">
    <property type="entry name" value="CAD &amp; PB1 domains"/>
    <property type="match status" value="1"/>
</dbReference>
<dbReference type="PROSITE" id="PS51745">
    <property type="entry name" value="PB1"/>
    <property type="match status" value="1"/>
</dbReference>
<feature type="chain" id="PRO_0000112847" description="Auxin-responsive protein IAA16">
    <location>
        <begin position="1"/>
        <end position="236"/>
    </location>
</feature>
<feature type="domain" description="PB1" evidence="2">
    <location>
        <begin position="118"/>
        <end position="218"/>
    </location>
</feature>
<feature type="region of interest" description="Disordered" evidence="3">
    <location>
        <begin position="82"/>
        <end position="110"/>
    </location>
</feature>
<feature type="short sequence motif" description="EAR-like (transcriptional repression)">
    <location>
        <begin position="9"/>
        <end position="13"/>
    </location>
</feature>
<feature type="compositionally biased region" description="Polar residues" evidence="3">
    <location>
        <begin position="85"/>
        <end position="94"/>
    </location>
</feature>
<sequence>MINFEATELRLGLPGGNHGGEMAGKNNGKRGFSETVDLKLNLSSTAMDSVSKVDLENMKEKVVKPPAKAQVVGWPPVRSFRKNVMSGQKPTTGDATEGNDKTSGSSGATSSASACATVAYVKVSMDGAPYLRKIDLKLYKTYQDLSNALSKMFSSFTIGNYGPQGMKDFMNESKLIDLLNGSDYVPTYEDKDGDWMLVGDVPWEMFVDSCKRIRIMKGSEAIGLAPRALEKCKNRS</sequence>
<reference key="1">
    <citation type="journal article" date="1997" name="Proc. Natl. Acad. Sci. U.S.A.">
        <title>Protein-protein interactions among the Aux/IAA proteins.</title>
        <authorList>
            <person name="Kim J."/>
            <person name="Harter K."/>
            <person name="Theologis A."/>
        </authorList>
    </citation>
    <scope>NUCLEOTIDE SEQUENCE [MRNA]</scope>
    <source>
        <strain>cv. Columbia</strain>
    </source>
</reference>
<reference key="2">
    <citation type="journal article" date="2000" name="Nature">
        <title>Sequence and analysis of chromosome 3 of the plant Arabidopsis thaliana.</title>
        <authorList>
            <person name="Salanoubat M."/>
            <person name="Lemcke K."/>
            <person name="Rieger M."/>
            <person name="Ansorge W."/>
            <person name="Unseld M."/>
            <person name="Fartmann B."/>
            <person name="Valle G."/>
            <person name="Bloecker H."/>
            <person name="Perez-Alonso M."/>
            <person name="Obermaier B."/>
            <person name="Delseny M."/>
            <person name="Boutry M."/>
            <person name="Grivell L.A."/>
            <person name="Mache R."/>
            <person name="Puigdomenech P."/>
            <person name="De Simone V."/>
            <person name="Choisne N."/>
            <person name="Artiguenave F."/>
            <person name="Robert C."/>
            <person name="Brottier P."/>
            <person name="Wincker P."/>
            <person name="Cattolico L."/>
            <person name="Weissenbach J."/>
            <person name="Saurin W."/>
            <person name="Quetier F."/>
            <person name="Schaefer M."/>
            <person name="Mueller-Auer S."/>
            <person name="Gabel C."/>
            <person name="Fuchs M."/>
            <person name="Benes V."/>
            <person name="Wurmbach E."/>
            <person name="Drzonek H."/>
            <person name="Erfle H."/>
            <person name="Jordan N."/>
            <person name="Bangert S."/>
            <person name="Wiedelmann R."/>
            <person name="Kranz H."/>
            <person name="Voss H."/>
            <person name="Holland R."/>
            <person name="Brandt P."/>
            <person name="Nyakatura G."/>
            <person name="Vezzi A."/>
            <person name="D'Angelo M."/>
            <person name="Pallavicini A."/>
            <person name="Toppo S."/>
            <person name="Simionati B."/>
            <person name="Conrad A."/>
            <person name="Hornischer K."/>
            <person name="Kauer G."/>
            <person name="Loehnert T.-H."/>
            <person name="Nordsiek G."/>
            <person name="Reichelt J."/>
            <person name="Scharfe M."/>
            <person name="Schoen O."/>
            <person name="Bargues M."/>
            <person name="Terol J."/>
            <person name="Climent J."/>
            <person name="Navarro P."/>
            <person name="Collado C."/>
            <person name="Perez-Perez A."/>
            <person name="Ottenwaelder B."/>
            <person name="Duchemin D."/>
            <person name="Cooke R."/>
            <person name="Laudie M."/>
            <person name="Berger-Llauro C."/>
            <person name="Purnelle B."/>
            <person name="Masuy D."/>
            <person name="de Haan M."/>
            <person name="Maarse A.C."/>
            <person name="Alcaraz J.-P."/>
            <person name="Cottet A."/>
            <person name="Casacuberta E."/>
            <person name="Monfort A."/>
            <person name="Argiriou A."/>
            <person name="Flores M."/>
            <person name="Liguori R."/>
            <person name="Vitale D."/>
            <person name="Mannhaupt G."/>
            <person name="Haase D."/>
            <person name="Schoof H."/>
            <person name="Rudd S."/>
            <person name="Zaccaria P."/>
            <person name="Mewes H.-W."/>
            <person name="Mayer K.F.X."/>
            <person name="Kaul S."/>
            <person name="Town C.D."/>
            <person name="Koo H.L."/>
            <person name="Tallon L.J."/>
            <person name="Jenkins J."/>
            <person name="Rooney T."/>
            <person name="Rizzo M."/>
            <person name="Walts A."/>
            <person name="Utterback T."/>
            <person name="Fujii C.Y."/>
            <person name="Shea T.P."/>
            <person name="Creasy T.H."/>
            <person name="Haas B."/>
            <person name="Maiti R."/>
            <person name="Wu D."/>
            <person name="Peterson J."/>
            <person name="Van Aken S."/>
            <person name="Pai G."/>
            <person name="Militscher J."/>
            <person name="Sellers P."/>
            <person name="Gill J.E."/>
            <person name="Feldblyum T.V."/>
            <person name="Preuss D."/>
            <person name="Lin X."/>
            <person name="Nierman W.C."/>
            <person name="Salzberg S.L."/>
            <person name="White O."/>
            <person name="Venter J.C."/>
            <person name="Fraser C.M."/>
            <person name="Kaneko T."/>
            <person name="Nakamura Y."/>
            <person name="Sato S."/>
            <person name="Kato T."/>
            <person name="Asamizu E."/>
            <person name="Sasamoto S."/>
            <person name="Kimura T."/>
            <person name="Idesawa K."/>
            <person name="Kawashima K."/>
            <person name="Kishida Y."/>
            <person name="Kiyokawa C."/>
            <person name="Kohara M."/>
            <person name="Matsumoto M."/>
            <person name="Matsuno A."/>
            <person name="Muraki A."/>
            <person name="Nakayama S."/>
            <person name="Nakazaki N."/>
            <person name="Shinpo S."/>
            <person name="Takeuchi C."/>
            <person name="Wada T."/>
            <person name="Watanabe A."/>
            <person name="Yamada M."/>
            <person name="Yasuda M."/>
            <person name="Tabata S."/>
        </authorList>
    </citation>
    <scope>NUCLEOTIDE SEQUENCE [LARGE SCALE GENOMIC DNA]</scope>
    <source>
        <strain>cv. Columbia</strain>
    </source>
</reference>
<reference key="3">
    <citation type="journal article" date="2017" name="Plant J.">
        <title>Araport11: a complete reannotation of the Arabidopsis thaliana reference genome.</title>
        <authorList>
            <person name="Cheng C.Y."/>
            <person name="Krishnakumar V."/>
            <person name="Chan A.P."/>
            <person name="Thibaud-Nissen F."/>
            <person name="Schobel S."/>
            <person name="Town C.D."/>
        </authorList>
    </citation>
    <scope>GENOME REANNOTATION</scope>
    <source>
        <strain>cv. Columbia</strain>
    </source>
</reference>
<reference key="4">
    <citation type="journal article" date="2003" name="Science">
        <title>Empirical analysis of transcriptional activity in the Arabidopsis genome.</title>
        <authorList>
            <person name="Yamada K."/>
            <person name="Lim J."/>
            <person name="Dale J.M."/>
            <person name="Chen H."/>
            <person name="Shinn P."/>
            <person name="Palm C.J."/>
            <person name="Southwick A.M."/>
            <person name="Wu H.C."/>
            <person name="Kim C.J."/>
            <person name="Nguyen M."/>
            <person name="Pham P.K."/>
            <person name="Cheuk R.F."/>
            <person name="Karlin-Newmann G."/>
            <person name="Liu S.X."/>
            <person name="Lam B."/>
            <person name="Sakano H."/>
            <person name="Wu T."/>
            <person name="Yu G."/>
            <person name="Miranda M."/>
            <person name="Quach H.L."/>
            <person name="Tripp M."/>
            <person name="Chang C.H."/>
            <person name="Lee J.M."/>
            <person name="Toriumi M.J."/>
            <person name="Chan M.M."/>
            <person name="Tang C.C."/>
            <person name="Onodera C.S."/>
            <person name="Deng J.M."/>
            <person name="Akiyama K."/>
            <person name="Ansari Y."/>
            <person name="Arakawa T."/>
            <person name="Banh J."/>
            <person name="Banno F."/>
            <person name="Bowser L."/>
            <person name="Brooks S.Y."/>
            <person name="Carninci P."/>
            <person name="Chao Q."/>
            <person name="Choy N."/>
            <person name="Enju A."/>
            <person name="Goldsmith A.D."/>
            <person name="Gurjal M."/>
            <person name="Hansen N.F."/>
            <person name="Hayashizaki Y."/>
            <person name="Johnson-Hopson C."/>
            <person name="Hsuan V.W."/>
            <person name="Iida K."/>
            <person name="Karnes M."/>
            <person name="Khan S."/>
            <person name="Koesema E."/>
            <person name="Ishida J."/>
            <person name="Jiang P.X."/>
            <person name="Jones T."/>
            <person name="Kawai J."/>
            <person name="Kamiya A."/>
            <person name="Meyers C."/>
            <person name="Nakajima M."/>
            <person name="Narusaka M."/>
            <person name="Seki M."/>
            <person name="Sakurai T."/>
            <person name="Satou M."/>
            <person name="Tamse R."/>
            <person name="Vaysberg M."/>
            <person name="Wallender E.K."/>
            <person name="Wong C."/>
            <person name="Yamamura Y."/>
            <person name="Yuan S."/>
            <person name="Shinozaki K."/>
            <person name="Davis R.W."/>
            <person name="Theologis A."/>
            <person name="Ecker J.R."/>
        </authorList>
    </citation>
    <scope>NUCLEOTIDE SEQUENCE [LARGE SCALE MRNA]</scope>
    <source>
        <strain>cv. Columbia</strain>
    </source>
</reference>
<reference key="5">
    <citation type="submission" date="2002-03" db="EMBL/GenBank/DDBJ databases">
        <title>Full-length cDNA from Arabidopsis thaliana.</title>
        <authorList>
            <person name="Brover V.V."/>
            <person name="Troukhan M.E."/>
            <person name="Alexandrov N.A."/>
            <person name="Lu Y.-P."/>
            <person name="Flavell R.B."/>
            <person name="Feldmann K.A."/>
        </authorList>
    </citation>
    <scope>NUCLEOTIDE SEQUENCE [LARGE SCALE MRNA]</scope>
</reference>
<reference key="6">
    <citation type="journal article" date="2002" name="Plant Mol. Biol.">
        <title>Genetics of Aux/IAA and ARF action in plant growth and development.</title>
        <authorList>
            <person name="Liscum E."/>
            <person name="Reed J.W."/>
        </authorList>
    </citation>
    <scope>GENE FAMILY</scope>
    <scope>NOMENCLATURE</scope>
    <scope>FUNCTION</scope>
</reference>
<reference key="7">
    <citation type="journal article" date="2004" name="Plant Cell">
        <title>Aux/IAA proteins contain a potent transcriptional repression domain.</title>
        <authorList>
            <person name="Tiwari S.B."/>
            <person name="Hagen G."/>
            <person name="Guilfoyle T.J."/>
        </authorList>
    </citation>
    <scope>TRANSCRIPTIONAL REPRESSION DOMAIN</scope>
</reference>
<proteinExistence type="evidence at protein level"/>
<gene>
    <name type="primary">IAA16</name>
    <name type="ordered locus">At3g04730</name>
    <name type="ORF">F7O18.22</name>
</gene>
<accession>O24407</accession>
<evidence type="ECO:0000250" key="1"/>
<evidence type="ECO:0000255" key="2">
    <source>
        <dbReference type="PROSITE-ProRule" id="PRU01081"/>
    </source>
</evidence>
<evidence type="ECO:0000256" key="3">
    <source>
        <dbReference type="SAM" id="MobiDB-lite"/>
    </source>
</evidence>
<evidence type="ECO:0000269" key="4">
    <source>
    </source>
</evidence>
<evidence type="ECO:0000305" key="5"/>
<protein>
    <recommendedName>
        <fullName>Auxin-responsive protein IAA16</fullName>
    </recommendedName>
    <alternativeName>
        <fullName>Indoleacetic acid-induced protein 16</fullName>
    </alternativeName>
</protein>
<comment type="function">
    <text evidence="4">Aux/IAA proteins are short-lived transcriptional factors that function as repressors of early auxin response genes at low auxin concentrations. Repression is thought to result from the interaction with auxin response factors (ARFs), proteins that bind to the auxin-responsive promoter element (AuxRE). Formation of heterodimers with ARF proteins may alter their ability to modulate early auxin response genes expression.</text>
</comment>
<comment type="subunit">
    <text evidence="1">Homodimers and heterodimers.</text>
</comment>
<comment type="interaction">
    <interactant intactId="EBI-632231">
        <id>O24407</id>
    </interactant>
    <interactant intactId="EBI-3946783">
        <id>Q9C5W9</id>
        <label>ARF18</label>
    </interactant>
    <organismsDiffer>false</organismsDiffer>
    <experiments>5</experiments>
</comment>
<comment type="interaction">
    <interactant intactId="EBI-632231">
        <id>O24407</id>
    </interactant>
    <interactant intactId="EBI-529887">
        <id>Q8RYC8</id>
        <label>ARF19</label>
    </interactant>
    <organismsDiffer>false</organismsDiffer>
    <experiments>6</experiments>
</comment>
<comment type="interaction">
    <interactant intactId="EBI-632231">
        <id>O24407</id>
    </interactant>
    <interactant intactId="EBI-15206592">
        <id>Q9ZUM0</id>
        <label>At2g02160</label>
    </interactant>
    <organismsDiffer>false</organismsDiffer>
    <experiments>3</experiments>
</comment>
<comment type="interaction">
    <interactant intactId="EBI-632231">
        <id>O24407</id>
    </interactant>
    <interactant intactId="EBI-630505">
        <id>P49677</id>
        <label>IAA1</label>
    </interactant>
    <organismsDiffer>false</organismsDiffer>
    <experiments>11</experiments>
</comment>
<comment type="interaction">
    <interactant intactId="EBI-632231">
        <id>O24407</id>
    </interactant>
    <interactant intactId="EBI-3946434">
        <id>Q38828</id>
        <label>IAA10</label>
    </interactant>
    <organismsDiffer>false</organismsDiffer>
    <experiments>11</experiments>
</comment>
<comment type="interaction">
    <interactant intactId="EBI-632231">
        <id>O24407</id>
    </interactant>
    <interactant intactId="EBI-2367923">
        <id>Q38829</id>
        <label>IAA11</label>
    </interactant>
    <organismsDiffer>false</organismsDiffer>
    <experiments>8</experiments>
</comment>
<comment type="interaction">
    <interactant intactId="EBI-632231">
        <id>O24407</id>
    </interactant>
    <interactant intactId="EBI-617608">
        <id>Q38830</id>
        <label>IAA12</label>
    </interactant>
    <organismsDiffer>false</organismsDiffer>
    <experiments>8</experiments>
</comment>
<comment type="interaction">
    <interactant intactId="EBI-632231">
        <id>O24407</id>
    </interactant>
    <interactant intactId="EBI-1554143">
        <id>Q38831</id>
        <label>IAA13</label>
    </interactant>
    <organismsDiffer>false</organismsDiffer>
    <experiments>9</experiments>
</comment>
<comment type="interaction">
    <interactant intactId="EBI-632231">
        <id>O24407</id>
    </interactant>
    <interactant intactId="EBI-25524519">
        <id>A0A2H1ZEF6</id>
        <label>IAA15</label>
    </interactant>
    <organismsDiffer>false</organismsDiffer>
    <experiments>5</experiments>
</comment>
<comment type="interaction">
    <interactant intactId="EBI-632231">
        <id>O24407</id>
    </interactant>
    <interactant intactId="EBI-632231">
        <id>O24407</id>
        <label>IAA16</label>
    </interactant>
    <organismsDiffer>false</organismsDiffer>
    <experiments>4</experiments>
</comment>
<comment type="interaction">
    <interactant intactId="EBI-632231">
        <id>O24407</id>
    </interactant>
    <interactant intactId="EBI-632243">
        <id>P93830</id>
        <label>IAA17</label>
    </interactant>
    <organismsDiffer>false</organismsDiffer>
    <experiments>8</experiments>
</comment>
<comment type="interaction">
    <interactant intactId="EBI-632231">
        <id>O24407</id>
    </interactant>
    <interactant intactId="EBI-2295525">
        <id>O24408</id>
        <label>IAA18</label>
    </interactant>
    <organismsDiffer>false</organismsDiffer>
    <experiments>4</experiments>
</comment>
<comment type="interaction">
    <interactant intactId="EBI-632231">
        <id>O24407</id>
    </interactant>
    <interactant intactId="EBI-632257">
        <id>O24409</id>
        <label>IAA19</label>
    </interactant>
    <organismsDiffer>false</organismsDiffer>
    <experiments>11</experiments>
</comment>
<comment type="interaction">
    <interactant intactId="EBI-632231">
        <id>O24407</id>
    </interactant>
    <interactant intactId="EBI-632343">
        <id>P49678</id>
        <label>IAA2</label>
    </interactant>
    <organismsDiffer>false</organismsDiffer>
    <experiments>10</experiments>
</comment>
<comment type="interaction">
    <interactant intactId="EBI-632231">
        <id>O24407</id>
    </interactant>
    <interactant intactId="EBI-632272">
        <id>O24410</id>
        <label>IAA20</label>
    </interactant>
    <organismsDiffer>false</organismsDiffer>
    <experiments>5</experiments>
</comment>
<comment type="interaction">
    <interactant intactId="EBI-632231">
        <id>O24407</id>
    </interactant>
    <interactant intactId="EBI-3947418">
        <id>Q8LAL2</id>
        <label>IAA26</label>
    </interactant>
    <organismsDiffer>false</organismsDiffer>
    <experiments>9</experiments>
</comment>
<comment type="interaction">
    <interactant intactId="EBI-632231">
        <id>O24407</id>
    </interactant>
    <interactant intactId="EBI-3946677">
        <id>Q9ZSY8</id>
        <label>IAA27</label>
    </interactant>
    <organismsDiffer>false</organismsDiffer>
    <experiments>9</experiments>
</comment>
<comment type="interaction">
    <interactant intactId="EBI-632231">
        <id>O24407</id>
    </interactant>
    <interactant intactId="EBI-3133404">
        <id>Q9XFM0</id>
        <label>IAA28</label>
    </interactant>
    <organismsDiffer>false</organismsDiffer>
    <experiments>10</experiments>
</comment>
<comment type="interaction">
    <interactant intactId="EBI-632231">
        <id>O24407</id>
    </interactant>
    <interactant intactId="EBI-307174">
        <id>Q38822</id>
        <label>IAA3</label>
    </interactant>
    <organismsDiffer>false</organismsDiffer>
    <experiments>12</experiments>
</comment>
<comment type="interaction">
    <interactant intactId="EBI-632231">
        <id>O24407</id>
    </interactant>
    <interactant intactId="EBI-3946408">
        <id>Q8H174</id>
        <label>IAA31</label>
    </interactant>
    <organismsDiffer>false</organismsDiffer>
    <experiments>7</experiments>
</comment>
<comment type="interaction">
    <interactant intactId="EBI-632231">
        <id>O24407</id>
    </interactant>
    <interactant intactId="EBI-3946739">
        <id>Q9FKM7</id>
        <label>IAA33</label>
    </interactant>
    <organismsDiffer>false</organismsDiffer>
    <experiments>3</experiments>
</comment>
<comment type="interaction">
    <interactant intactId="EBI-632231">
        <id>O24407</id>
    </interactant>
    <interactant intactId="EBI-3946459">
        <id>Q9C5X0</id>
        <label>IAA34</label>
    </interactant>
    <organismsDiffer>false</organismsDiffer>
    <experiments>6</experiments>
</comment>
<comment type="interaction">
    <interactant intactId="EBI-632231">
        <id>O24407</id>
    </interactant>
    <interactant intactId="EBI-632187">
        <id>P33077</id>
        <label>IAA4</label>
    </interactant>
    <organismsDiffer>false</organismsDiffer>
    <experiments>9</experiments>
</comment>
<comment type="interaction">
    <interactant intactId="EBI-632231">
        <id>O24407</id>
    </interactant>
    <interactant intactId="EBI-3946487">
        <id>P33078</id>
        <label>IAA5</label>
    </interactant>
    <organismsDiffer>false</organismsDiffer>
    <experiments>7</experiments>
</comment>
<comment type="interaction">
    <interactant intactId="EBI-632231">
        <id>O24407</id>
    </interactant>
    <interactant intactId="EBI-1554124">
        <id>Q38824</id>
        <label>IAA6</label>
    </interactant>
    <organismsDiffer>false</organismsDiffer>
    <experiments>8</experiments>
</comment>
<comment type="interaction">
    <interactant intactId="EBI-632231">
        <id>O24407</id>
    </interactant>
    <interactant intactId="EBI-602959">
        <id>Q38825</id>
        <label>IAA7</label>
    </interactant>
    <organismsDiffer>false</organismsDiffer>
    <experiments>3</experiments>
</comment>
<comment type="interaction">
    <interactant intactId="EBI-632231">
        <id>O24407</id>
    </interactant>
    <interactant intactId="EBI-632200">
        <id>Q38826</id>
        <label>IAA8</label>
    </interactant>
    <organismsDiffer>false</organismsDiffer>
    <experiments>7</experiments>
</comment>
<comment type="interaction">
    <interactant intactId="EBI-632231">
        <id>O24407</id>
    </interactant>
    <interactant intactId="EBI-632216">
        <id>Q38827</id>
        <label>IAA9</label>
    </interactant>
    <organismsDiffer>false</organismsDiffer>
    <experiments>4</experiments>
</comment>
<comment type="interaction">
    <interactant intactId="EBI-632231">
        <id>O24407</id>
    </interactant>
    <interactant intactId="EBI-15198743">
        <id>Q9LSI4</id>
        <label>MGH6.1</label>
    </interactant>
    <organismsDiffer>false</organismsDiffer>
    <experiments>3</experiments>
</comment>
<comment type="interaction">
    <interactant intactId="EBI-632231">
        <id>O24407</id>
    </interactant>
    <interactant intactId="EBI-21497119">
        <id>Q9LTC4</id>
        <label>MYB15</label>
    </interactant>
    <organismsDiffer>false</organismsDiffer>
    <experiments>3</experiments>
</comment>
<comment type="interaction">
    <interactant intactId="EBI-632231">
        <id>O24407</id>
    </interactant>
    <interactant intactId="EBI-963647">
        <id>Q9C8Y3</id>
        <label>RGL1</label>
    </interactant>
    <organismsDiffer>false</organismsDiffer>
    <experiments>3</experiments>
</comment>
<comment type="interaction">
    <interactant intactId="EBI-632231">
        <id>O24407</id>
    </interactant>
    <interactant intactId="EBI-1536703">
        <id>Q9FUA4</id>
        <label>SPT</label>
    </interactant>
    <organismsDiffer>false</organismsDiffer>
    <experiments>3</experiments>
</comment>
<comment type="interaction">
    <interactant intactId="EBI-632231">
        <id>O24407</id>
    </interactant>
    <interactant intactId="EBI-4426168">
        <id>Q9FTA2</id>
        <label>TCP21</label>
    </interactant>
    <organismsDiffer>false</organismsDiffer>
    <experiments>3</experiments>
</comment>
<comment type="interaction">
    <interactant intactId="EBI-632231">
        <id>O24407</id>
    </interactant>
    <interactant intactId="EBI-25522447">
        <id>Q9MAH8</id>
        <label>TCP3</label>
    </interactant>
    <organismsDiffer>false</organismsDiffer>
    <experiments>3</experiments>
</comment>
<comment type="interaction">
    <interactant intactId="EBI-632231">
        <id>O24407</id>
    </interactant>
    <interactant intactId="EBI-4426557">
        <id>Q84MB2</id>
        <label>TIFY8</label>
    </interactant>
    <organismsDiffer>false</organismsDiffer>
    <experiments>3</experiments>
</comment>
<comment type="interaction">
    <interactant intactId="EBI-632231">
        <id>O24407</id>
    </interactant>
    <interactant intactId="EBI-4424568">
        <id>Q9LVG2</id>
        <label>TOE2</label>
    </interactant>
    <organismsDiffer>false</organismsDiffer>
    <experiments>3</experiments>
</comment>
<comment type="interaction">
    <interactant intactId="EBI-632231">
        <id>O24407</id>
    </interactant>
    <interactant intactId="EBI-1806244">
        <id>O64722</id>
        <label>ZHD3</label>
    </interactant>
    <organismsDiffer>false</organismsDiffer>
    <experiments>3</experiments>
</comment>
<comment type="subcellular location">
    <subcellularLocation>
        <location evidence="1">Nucleus</location>
    </subcellularLocation>
</comment>
<comment type="induction">
    <text>By auxin.</text>
</comment>
<comment type="domain">
    <text>The N-terminal half of the protein contains two conserved domains I and II. Domain I includes a slightly degenerated ERF-associated amphiphilic repression (EAR) motif which seems to be involved in the activity of transcriptional repression. Domain II is required for the correct degradation of the protein through the SCF-mediated ubiquitin-proteasome pathway. Interactions between Aux/IAA proteins and auxin response factors (ARFs) occur through their C-terminal dimerization domains III and IV.</text>
</comment>
<comment type="similarity">
    <text evidence="5">Belongs to the Aux/IAA family.</text>
</comment>
<organism>
    <name type="scientific">Arabidopsis thaliana</name>
    <name type="common">Mouse-ear cress</name>
    <dbReference type="NCBI Taxonomy" id="3702"/>
    <lineage>
        <taxon>Eukaryota</taxon>
        <taxon>Viridiplantae</taxon>
        <taxon>Streptophyta</taxon>
        <taxon>Embryophyta</taxon>
        <taxon>Tracheophyta</taxon>
        <taxon>Spermatophyta</taxon>
        <taxon>Magnoliopsida</taxon>
        <taxon>eudicotyledons</taxon>
        <taxon>Gunneridae</taxon>
        <taxon>Pentapetalae</taxon>
        <taxon>rosids</taxon>
        <taxon>malvids</taxon>
        <taxon>Brassicales</taxon>
        <taxon>Brassicaceae</taxon>
        <taxon>Camelineae</taxon>
        <taxon>Arabidopsis</taxon>
    </lineage>
</organism>
<name>IAA16_ARATH</name>